<evidence type="ECO:0000255" key="1">
    <source>
        <dbReference type="HAMAP-Rule" id="MF_00163"/>
    </source>
</evidence>
<proteinExistence type="inferred from homology"/>
<organism>
    <name type="scientific">Tropheryma whipplei (strain TW08/27)</name>
    <name type="common">Whipple's bacillus</name>
    <dbReference type="NCBI Taxonomy" id="218496"/>
    <lineage>
        <taxon>Bacteria</taxon>
        <taxon>Bacillati</taxon>
        <taxon>Actinomycetota</taxon>
        <taxon>Actinomycetes</taxon>
        <taxon>Micrococcales</taxon>
        <taxon>Tropherymataceae</taxon>
        <taxon>Tropheryma</taxon>
    </lineage>
</organism>
<feature type="chain" id="PRO_0000082870" description="Peptide deformylase">
    <location>
        <begin position="1"/>
        <end position="201"/>
    </location>
</feature>
<feature type="active site" evidence="1">
    <location>
        <position position="157"/>
    </location>
</feature>
<feature type="binding site" evidence="1">
    <location>
        <position position="114"/>
    </location>
    <ligand>
        <name>Fe cation</name>
        <dbReference type="ChEBI" id="CHEBI:24875"/>
    </ligand>
</feature>
<feature type="binding site" evidence="1">
    <location>
        <position position="156"/>
    </location>
    <ligand>
        <name>Fe cation</name>
        <dbReference type="ChEBI" id="CHEBI:24875"/>
    </ligand>
</feature>
<feature type="binding site" evidence="1">
    <location>
        <position position="160"/>
    </location>
    <ligand>
        <name>Fe cation</name>
        <dbReference type="ChEBI" id="CHEBI:24875"/>
    </ligand>
</feature>
<name>DEF_TROW8</name>
<keyword id="KW-0378">Hydrolase</keyword>
<keyword id="KW-0408">Iron</keyword>
<keyword id="KW-0479">Metal-binding</keyword>
<keyword id="KW-0648">Protein biosynthesis</keyword>
<protein>
    <recommendedName>
        <fullName evidence="1">Peptide deformylase</fullName>
        <shortName evidence="1">PDF</shortName>
        <ecNumber evidence="1">3.5.1.88</ecNumber>
    </recommendedName>
    <alternativeName>
        <fullName evidence="1">Polypeptide deformylase</fullName>
    </alternativeName>
</protein>
<comment type="function">
    <text evidence="1">Removes the formyl group from the N-terminal Met of newly synthesized proteins. Requires at least a dipeptide for an efficient rate of reaction. N-terminal L-methionine is a prerequisite for activity but the enzyme has broad specificity at other positions.</text>
</comment>
<comment type="catalytic activity">
    <reaction evidence="1">
        <text>N-terminal N-formyl-L-methionyl-[peptide] + H2O = N-terminal L-methionyl-[peptide] + formate</text>
        <dbReference type="Rhea" id="RHEA:24420"/>
        <dbReference type="Rhea" id="RHEA-COMP:10639"/>
        <dbReference type="Rhea" id="RHEA-COMP:10640"/>
        <dbReference type="ChEBI" id="CHEBI:15377"/>
        <dbReference type="ChEBI" id="CHEBI:15740"/>
        <dbReference type="ChEBI" id="CHEBI:49298"/>
        <dbReference type="ChEBI" id="CHEBI:64731"/>
        <dbReference type="EC" id="3.5.1.88"/>
    </reaction>
</comment>
<comment type="cofactor">
    <cofactor evidence="1">
        <name>Fe(2+)</name>
        <dbReference type="ChEBI" id="CHEBI:29033"/>
    </cofactor>
    <text evidence="1">Binds 1 Fe(2+) ion.</text>
</comment>
<comment type="similarity">
    <text evidence="1">Belongs to the polypeptide deformylase family.</text>
</comment>
<reference key="1">
    <citation type="journal article" date="2003" name="Lancet">
        <title>Sequencing and analysis of the genome of the Whipple's disease bacterium Tropheryma whipplei.</title>
        <authorList>
            <person name="Bentley S.D."/>
            <person name="Maiwald M."/>
            <person name="Murphy L.D."/>
            <person name="Pallen M.J."/>
            <person name="Yeats C.A."/>
            <person name="Dover L.G."/>
            <person name="Norbertczak H.T."/>
            <person name="Besra G.S."/>
            <person name="Quail M.A."/>
            <person name="Harris D.E."/>
            <person name="von Herbay A."/>
            <person name="Goble A."/>
            <person name="Rutter S."/>
            <person name="Squares R."/>
            <person name="Squares S."/>
            <person name="Barrell B.G."/>
            <person name="Parkhill J."/>
            <person name="Relman D.A."/>
        </authorList>
    </citation>
    <scope>NUCLEOTIDE SEQUENCE [LARGE SCALE GENOMIC DNA]</scope>
    <source>
        <strain>TW08/27</strain>
    </source>
</reference>
<dbReference type="EC" id="3.5.1.88" evidence="1"/>
<dbReference type="EMBL" id="BX251411">
    <property type="protein sequence ID" value="CAD67130.1"/>
    <property type="molecule type" value="Genomic_DNA"/>
</dbReference>
<dbReference type="SMR" id="Q83HQ3"/>
<dbReference type="KEGG" id="tws:TW462"/>
<dbReference type="HOGENOM" id="CLU_061901_1_2_11"/>
<dbReference type="GO" id="GO:0046872">
    <property type="term" value="F:metal ion binding"/>
    <property type="evidence" value="ECO:0007669"/>
    <property type="project" value="UniProtKB-KW"/>
</dbReference>
<dbReference type="GO" id="GO:0042586">
    <property type="term" value="F:peptide deformylase activity"/>
    <property type="evidence" value="ECO:0007669"/>
    <property type="project" value="UniProtKB-UniRule"/>
</dbReference>
<dbReference type="GO" id="GO:0043686">
    <property type="term" value="P:co-translational protein modification"/>
    <property type="evidence" value="ECO:0007669"/>
    <property type="project" value="TreeGrafter"/>
</dbReference>
<dbReference type="GO" id="GO:0006412">
    <property type="term" value="P:translation"/>
    <property type="evidence" value="ECO:0007669"/>
    <property type="project" value="UniProtKB-UniRule"/>
</dbReference>
<dbReference type="CDD" id="cd00487">
    <property type="entry name" value="Pep_deformylase"/>
    <property type="match status" value="1"/>
</dbReference>
<dbReference type="Gene3D" id="3.90.45.10">
    <property type="entry name" value="Peptide deformylase"/>
    <property type="match status" value="1"/>
</dbReference>
<dbReference type="HAMAP" id="MF_00163">
    <property type="entry name" value="Pep_deformylase"/>
    <property type="match status" value="1"/>
</dbReference>
<dbReference type="InterPro" id="IPR023635">
    <property type="entry name" value="Peptide_deformylase"/>
</dbReference>
<dbReference type="InterPro" id="IPR036821">
    <property type="entry name" value="Peptide_deformylase_sf"/>
</dbReference>
<dbReference type="NCBIfam" id="TIGR00079">
    <property type="entry name" value="pept_deformyl"/>
    <property type="match status" value="1"/>
</dbReference>
<dbReference type="NCBIfam" id="NF001159">
    <property type="entry name" value="PRK00150.1-3"/>
    <property type="match status" value="1"/>
</dbReference>
<dbReference type="PANTHER" id="PTHR10458">
    <property type="entry name" value="PEPTIDE DEFORMYLASE"/>
    <property type="match status" value="1"/>
</dbReference>
<dbReference type="PANTHER" id="PTHR10458:SF2">
    <property type="entry name" value="PEPTIDE DEFORMYLASE, MITOCHONDRIAL"/>
    <property type="match status" value="1"/>
</dbReference>
<dbReference type="Pfam" id="PF01327">
    <property type="entry name" value="Pep_deformylase"/>
    <property type="match status" value="1"/>
</dbReference>
<dbReference type="PIRSF" id="PIRSF004749">
    <property type="entry name" value="Pep_def"/>
    <property type="match status" value="1"/>
</dbReference>
<dbReference type="PRINTS" id="PR01576">
    <property type="entry name" value="PDEFORMYLASE"/>
</dbReference>
<dbReference type="SUPFAM" id="SSF56420">
    <property type="entry name" value="Peptide deformylase"/>
    <property type="match status" value="1"/>
</dbReference>
<accession>Q83HQ3</accession>
<sequence>MPKISGGKILPIYITGHAVLHAPAKPVTDFSGIQEIVRDMFATMFAAPGVGLAGPQIGLGLRIFVYSYTEGDTLHQGVAINPDLLIPKGVPKRQTHKQQANNSTSCDEPDREGCLSFPGYQFPLERAPQVTLSAFDENKKPFTVHATGWLARIFQHEFDHLQGTLYVDRLAQKYSGEVRQAVLNNKWGIPGKYWVPQEPKE</sequence>
<gene>
    <name evidence="1" type="primary">def</name>
    <name type="ordered locus">TW462</name>
</gene>